<proteinExistence type="inferred from homology"/>
<name>VF067_IIV6</name>
<evidence type="ECO:0000255" key="1"/>
<evidence type="ECO:0000256" key="2">
    <source>
        <dbReference type="SAM" id="MobiDB-lite"/>
    </source>
</evidence>
<evidence type="ECO:0000305" key="3"/>
<feature type="chain" id="PRO_0000377761" description="Uncharacterized protein 067R">
    <location>
        <begin position="1"/>
        <end position="456"/>
    </location>
</feature>
<feature type="transmembrane region" description="Helical" evidence="1">
    <location>
        <begin position="347"/>
        <end position="365"/>
    </location>
</feature>
<feature type="region of interest" description="Disordered" evidence="2">
    <location>
        <begin position="181"/>
        <end position="231"/>
    </location>
</feature>
<feature type="region of interest" description="Disordered" evidence="2">
    <location>
        <begin position="383"/>
        <end position="456"/>
    </location>
</feature>
<feature type="coiled-coil region" evidence="1">
    <location>
        <begin position="216"/>
        <end position="248"/>
    </location>
</feature>
<feature type="compositionally biased region" description="Basic and acidic residues" evidence="2">
    <location>
        <begin position="181"/>
        <end position="210"/>
    </location>
</feature>
<feature type="compositionally biased region" description="Basic and acidic residues" evidence="2">
    <location>
        <begin position="217"/>
        <end position="231"/>
    </location>
</feature>
<feature type="compositionally biased region" description="Polar residues" evidence="2">
    <location>
        <begin position="383"/>
        <end position="407"/>
    </location>
</feature>
<feature type="compositionally biased region" description="Basic and acidic residues" evidence="2">
    <location>
        <begin position="441"/>
        <end position="456"/>
    </location>
</feature>
<keyword id="KW-0175">Coiled coil</keyword>
<keyword id="KW-0472">Membrane</keyword>
<keyword id="KW-1185">Reference proteome</keyword>
<keyword id="KW-0812">Transmembrane</keyword>
<keyword id="KW-1133">Transmembrane helix</keyword>
<sequence>MKTIIIRKIPPIDDFKRFVPKRFSRFPQLYLELLENKNKVKLNCIGKEFVPTTPPLSTGRETIVSKDPHVVQSSISNTPIRTEIKDTPRYEETPIKRTITVTNVKTVKSSSISGMNGRNRLYDDDLFDDDRYKSPTTRKFQGEKRDEDIRLIPKSSNIGSSKYKPVLTRVEENENKKIHIDQRKESIVNDERKKNPEFREKPDKNEDKKVKPPPSLKEIENKGIDHEENEEDKKRELMFKLQLLQKQYPLRDIPDFTIRSEYKSMKKTYDIIVKQLSVDSSVETYKNYLVGGFMVCEMVFGRIGFDMEGFTQQQLLSMNSYEKLLLELGEKTYTPAGMDKWPVEVRLALAILFNAVWFIAAKMIMKKTKINILSLFNNTKGLNKSGTTPNSVSPRTWGNSKSPQSEFNFIGRKNENNSVGRTQMKGPSINRIDEGFGSESDESRREMREQGIETLK</sequence>
<gene>
    <name type="ORF">IIV6-067R</name>
</gene>
<organism>
    <name type="scientific">Invertebrate iridescent virus 6</name>
    <name type="common">IIV-6</name>
    <name type="synonym">Chilo iridescent virus</name>
    <dbReference type="NCBI Taxonomy" id="176652"/>
    <lineage>
        <taxon>Viruses</taxon>
        <taxon>Varidnaviria</taxon>
        <taxon>Bamfordvirae</taxon>
        <taxon>Nucleocytoviricota</taxon>
        <taxon>Megaviricetes</taxon>
        <taxon>Pimascovirales</taxon>
        <taxon>Iridoviridae</taxon>
        <taxon>Betairidovirinae</taxon>
        <taxon>Iridovirus</taxon>
    </lineage>
</organism>
<organismHost>
    <name type="scientific">Acheta domesticus</name>
    <name type="common">House cricket</name>
    <dbReference type="NCBI Taxonomy" id="6997"/>
</organismHost>
<organismHost>
    <name type="scientific">Chilo suppressalis</name>
    <name type="common">Asiatic rice borer moth</name>
    <dbReference type="NCBI Taxonomy" id="168631"/>
</organismHost>
<organismHost>
    <name type="scientific">Gryllus bimaculatus</name>
    <name type="common">Two-spotted cricket</name>
    <dbReference type="NCBI Taxonomy" id="6999"/>
</organismHost>
<organismHost>
    <name type="scientific">Gryllus campestris</name>
    <dbReference type="NCBI Taxonomy" id="58607"/>
</organismHost>
<organismHost>
    <name type="scientific">Spodoptera frugiperda</name>
    <name type="common">Fall armyworm</name>
    <dbReference type="NCBI Taxonomy" id="7108"/>
</organismHost>
<reference key="1">
    <citation type="journal article" date="2001" name="Virology">
        <title>Analysis of the first complete DNA sequence of an invertebrate iridovirus: coding strategy of the genome of Chilo iridescent virus.</title>
        <authorList>
            <person name="Jakob N.J."/>
            <person name="Mueller K."/>
            <person name="Bahr U."/>
            <person name="Darai G."/>
        </authorList>
    </citation>
    <scope>NUCLEOTIDE SEQUENCE [LARGE SCALE GENOMIC DNA]</scope>
</reference>
<reference key="2">
    <citation type="journal article" date="2007" name="Virol. J.">
        <title>Comparative genomic analysis of the family Iridoviridae: re-annotating and defining the core set of iridovirus genes.</title>
        <authorList>
            <person name="Eaton H.E."/>
            <person name="Metcalf J."/>
            <person name="Penny E."/>
            <person name="Tcherepanov V."/>
            <person name="Upton C."/>
            <person name="Brunetti C.R."/>
        </authorList>
    </citation>
    <scope>GENOME REANNOTATION</scope>
</reference>
<dbReference type="EMBL" id="AF303741">
    <property type="protein sequence ID" value="AAB94419.1"/>
    <property type="molecule type" value="Genomic_DNA"/>
</dbReference>
<dbReference type="PIR" id="T03045">
    <property type="entry name" value="T03045"/>
</dbReference>
<dbReference type="RefSeq" id="NP_149530.1">
    <property type="nucleotide sequence ID" value="NC_003038.1"/>
</dbReference>
<dbReference type="KEGG" id="vg:1733049"/>
<dbReference type="OrthoDB" id="10549at10239"/>
<dbReference type="Proteomes" id="UP000001359">
    <property type="component" value="Genome"/>
</dbReference>
<dbReference type="GO" id="GO:0016020">
    <property type="term" value="C:membrane"/>
    <property type="evidence" value="ECO:0007669"/>
    <property type="project" value="UniProtKB-SubCell"/>
</dbReference>
<dbReference type="InterPro" id="IPR043910">
    <property type="entry name" value="DUF5767"/>
</dbReference>
<dbReference type="Pfam" id="PF19071">
    <property type="entry name" value="DUF5767"/>
    <property type="match status" value="1"/>
</dbReference>
<accession>O55708</accession>
<comment type="subcellular location">
    <subcellularLocation>
        <location evidence="3">Membrane</location>
        <topology evidence="3">Single-pass membrane protein</topology>
    </subcellularLocation>
</comment>
<comment type="similarity">
    <text evidence="3">Belongs to the IIV-6 067R family.</text>
</comment>
<protein>
    <recommendedName>
        <fullName>Uncharacterized protein 067R</fullName>
    </recommendedName>
</protein>